<evidence type="ECO:0000255" key="1">
    <source>
        <dbReference type="HAMAP-Rule" id="MF_00144"/>
    </source>
</evidence>
<dbReference type="EC" id="2.8.1.13" evidence="1"/>
<dbReference type="EMBL" id="CP000949">
    <property type="protein sequence ID" value="ACA73902.1"/>
    <property type="molecule type" value="Genomic_DNA"/>
</dbReference>
<dbReference type="SMR" id="B1JBJ1"/>
<dbReference type="STRING" id="390235.PputW619_3418"/>
<dbReference type="KEGG" id="ppw:PputW619_3418"/>
<dbReference type="eggNOG" id="COG0482">
    <property type="taxonomic scope" value="Bacteria"/>
</dbReference>
<dbReference type="HOGENOM" id="CLU_035188_1_0_6"/>
<dbReference type="OrthoDB" id="9800696at2"/>
<dbReference type="GO" id="GO:0005737">
    <property type="term" value="C:cytoplasm"/>
    <property type="evidence" value="ECO:0007669"/>
    <property type="project" value="UniProtKB-SubCell"/>
</dbReference>
<dbReference type="GO" id="GO:0005524">
    <property type="term" value="F:ATP binding"/>
    <property type="evidence" value="ECO:0007669"/>
    <property type="project" value="UniProtKB-KW"/>
</dbReference>
<dbReference type="GO" id="GO:0000049">
    <property type="term" value="F:tRNA binding"/>
    <property type="evidence" value="ECO:0007669"/>
    <property type="project" value="UniProtKB-KW"/>
</dbReference>
<dbReference type="GO" id="GO:0103016">
    <property type="term" value="F:tRNA-uridine 2-sulfurtransferase activity"/>
    <property type="evidence" value="ECO:0007669"/>
    <property type="project" value="UniProtKB-EC"/>
</dbReference>
<dbReference type="GO" id="GO:0002143">
    <property type="term" value="P:tRNA wobble position uridine thiolation"/>
    <property type="evidence" value="ECO:0007669"/>
    <property type="project" value="TreeGrafter"/>
</dbReference>
<dbReference type="CDD" id="cd01998">
    <property type="entry name" value="MnmA_TRMU-like"/>
    <property type="match status" value="1"/>
</dbReference>
<dbReference type="FunFam" id="2.30.30.280:FF:000001">
    <property type="entry name" value="tRNA-specific 2-thiouridylase MnmA"/>
    <property type="match status" value="1"/>
</dbReference>
<dbReference type="FunFam" id="2.40.30.10:FF:000023">
    <property type="entry name" value="tRNA-specific 2-thiouridylase MnmA"/>
    <property type="match status" value="1"/>
</dbReference>
<dbReference type="FunFam" id="3.40.50.620:FF:000004">
    <property type="entry name" value="tRNA-specific 2-thiouridylase MnmA"/>
    <property type="match status" value="1"/>
</dbReference>
<dbReference type="Gene3D" id="2.30.30.280">
    <property type="entry name" value="Adenine nucleotide alpha hydrolases-like domains"/>
    <property type="match status" value="1"/>
</dbReference>
<dbReference type="Gene3D" id="3.40.50.620">
    <property type="entry name" value="HUPs"/>
    <property type="match status" value="1"/>
</dbReference>
<dbReference type="Gene3D" id="2.40.30.10">
    <property type="entry name" value="Translation factors"/>
    <property type="match status" value="1"/>
</dbReference>
<dbReference type="HAMAP" id="MF_00144">
    <property type="entry name" value="tRNA_thiouridyl_MnmA"/>
    <property type="match status" value="1"/>
</dbReference>
<dbReference type="InterPro" id="IPR004506">
    <property type="entry name" value="MnmA-like"/>
</dbReference>
<dbReference type="InterPro" id="IPR046885">
    <property type="entry name" value="MnmA-like_C"/>
</dbReference>
<dbReference type="InterPro" id="IPR046884">
    <property type="entry name" value="MnmA-like_central"/>
</dbReference>
<dbReference type="InterPro" id="IPR023382">
    <property type="entry name" value="MnmA-like_central_sf"/>
</dbReference>
<dbReference type="InterPro" id="IPR014729">
    <property type="entry name" value="Rossmann-like_a/b/a_fold"/>
</dbReference>
<dbReference type="NCBIfam" id="NF001138">
    <property type="entry name" value="PRK00143.1"/>
    <property type="match status" value="1"/>
</dbReference>
<dbReference type="NCBIfam" id="TIGR00420">
    <property type="entry name" value="trmU"/>
    <property type="match status" value="1"/>
</dbReference>
<dbReference type="PANTHER" id="PTHR11933:SF5">
    <property type="entry name" value="MITOCHONDRIAL TRNA-SPECIFIC 2-THIOURIDYLASE 1"/>
    <property type="match status" value="1"/>
</dbReference>
<dbReference type="PANTHER" id="PTHR11933">
    <property type="entry name" value="TRNA 5-METHYLAMINOMETHYL-2-THIOURIDYLATE -METHYLTRANSFERASE"/>
    <property type="match status" value="1"/>
</dbReference>
<dbReference type="Pfam" id="PF03054">
    <property type="entry name" value="tRNA_Me_trans"/>
    <property type="match status" value="1"/>
</dbReference>
<dbReference type="Pfam" id="PF20258">
    <property type="entry name" value="tRNA_Me_trans_C"/>
    <property type="match status" value="1"/>
</dbReference>
<dbReference type="Pfam" id="PF20259">
    <property type="entry name" value="tRNA_Me_trans_M"/>
    <property type="match status" value="1"/>
</dbReference>
<dbReference type="SUPFAM" id="SSF52402">
    <property type="entry name" value="Adenine nucleotide alpha hydrolases-like"/>
    <property type="match status" value="1"/>
</dbReference>
<organism>
    <name type="scientific">Pseudomonas putida (strain W619)</name>
    <dbReference type="NCBI Taxonomy" id="390235"/>
    <lineage>
        <taxon>Bacteria</taxon>
        <taxon>Pseudomonadati</taxon>
        <taxon>Pseudomonadota</taxon>
        <taxon>Gammaproteobacteria</taxon>
        <taxon>Pseudomonadales</taxon>
        <taxon>Pseudomonadaceae</taxon>
        <taxon>Pseudomonas</taxon>
    </lineage>
</organism>
<gene>
    <name evidence="1" type="primary">mnmA</name>
    <name type="ordered locus">PputW619_3418</name>
</gene>
<sequence>MTSPALKDPAKTRVIVGMSGGVDSSVSALLLMEQGYQVEGLFMKNWEEDDGTEYCTAREDLADAQAVCDRIGIKLHTANFAAEYWDNVFEHFLEEYKAGRTPNPDILCNREIKFKAFLDYALSLGADLIATGHYVRRRDTGAVTELLKGLDPNKDQSYFLHAVGGKEIARTLFPVGELEKPEVRAIAEKHGLATAKKKDSTGICFIGERRFSDFLKQYLPAQPGEIQTTEGEVIGRHHGLMYHTIGQRQGLGIGGLKDAGDEPWYVLHKDLTRNVLVVGQGNEHPWLFSRALLASEIFWVNPIDLSSPRTLTAKVRYRQSDQRCTLALTESGYRAVFDEPQRAVTPGQSVVFYDGEVCLGGGVIETAEPWSPRA</sequence>
<accession>B1JBJ1</accession>
<keyword id="KW-0067">ATP-binding</keyword>
<keyword id="KW-0963">Cytoplasm</keyword>
<keyword id="KW-1015">Disulfide bond</keyword>
<keyword id="KW-0547">Nucleotide-binding</keyword>
<keyword id="KW-0694">RNA-binding</keyword>
<keyword id="KW-0808">Transferase</keyword>
<keyword id="KW-0819">tRNA processing</keyword>
<keyword id="KW-0820">tRNA-binding</keyword>
<comment type="function">
    <text evidence="1">Catalyzes the 2-thiolation of uridine at the wobble position (U34) of tRNA, leading to the formation of s(2)U34.</text>
</comment>
<comment type="catalytic activity">
    <reaction evidence="1">
        <text>S-sulfanyl-L-cysteinyl-[protein] + uridine(34) in tRNA + AH2 + ATP = 2-thiouridine(34) in tRNA + L-cysteinyl-[protein] + A + AMP + diphosphate + H(+)</text>
        <dbReference type="Rhea" id="RHEA:47032"/>
        <dbReference type="Rhea" id="RHEA-COMP:10131"/>
        <dbReference type="Rhea" id="RHEA-COMP:11726"/>
        <dbReference type="Rhea" id="RHEA-COMP:11727"/>
        <dbReference type="Rhea" id="RHEA-COMP:11728"/>
        <dbReference type="ChEBI" id="CHEBI:13193"/>
        <dbReference type="ChEBI" id="CHEBI:15378"/>
        <dbReference type="ChEBI" id="CHEBI:17499"/>
        <dbReference type="ChEBI" id="CHEBI:29950"/>
        <dbReference type="ChEBI" id="CHEBI:30616"/>
        <dbReference type="ChEBI" id="CHEBI:33019"/>
        <dbReference type="ChEBI" id="CHEBI:61963"/>
        <dbReference type="ChEBI" id="CHEBI:65315"/>
        <dbReference type="ChEBI" id="CHEBI:87170"/>
        <dbReference type="ChEBI" id="CHEBI:456215"/>
        <dbReference type="EC" id="2.8.1.13"/>
    </reaction>
</comment>
<comment type="subcellular location">
    <subcellularLocation>
        <location evidence="1">Cytoplasm</location>
    </subcellularLocation>
</comment>
<comment type="similarity">
    <text evidence="1">Belongs to the MnmA/TRMU family.</text>
</comment>
<feature type="chain" id="PRO_0000349760" description="tRNA-specific 2-thiouridylase MnmA">
    <location>
        <begin position="1"/>
        <end position="374"/>
    </location>
</feature>
<feature type="region of interest" description="Interaction with target base in tRNA" evidence="1">
    <location>
        <begin position="103"/>
        <end position="105"/>
    </location>
</feature>
<feature type="region of interest" description="Interaction with tRNA" evidence="1">
    <location>
        <begin position="154"/>
        <end position="156"/>
    </location>
</feature>
<feature type="region of interest" description="Interaction with tRNA" evidence="1">
    <location>
        <begin position="316"/>
        <end position="317"/>
    </location>
</feature>
<feature type="active site" description="Nucleophile" evidence="1">
    <location>
        <position position="108"/>
    </location>
</feature>
<feature type="active site" description="Cysteine persulfide intermediate" evidence="1">
    <location>
        <position position="204"/>
    </location>
</feature>
<feature type="binding site" evidence="1">
    <location>
        <begin position="17"/>
        <end position="24"/>
    </location>
    <ligand>
        <name>ATP</name>
        <dbReference type="ChEBI" id="CHEBI:30616"/>
    </ligand>
</feature>
<feature type="binding site" evidence="1">
    <location>
        <position position="43"/>
    </location>
    <ligand>
        <name>ATP</name>
        <dbReference type="ChEBI" id="CHEBI:30616"/>
    </ligand>
</feature>
<feature type="binding site" evidence="1">
    <location>
        <position position="132"/>
    </location>
    <ligand>
        <name>ATP</name>
        <dbReference type="ChEBI" id="CHEBI:30616"/>
    </ligand>
</feature>
<feature type="site" description="Interaction with tRNA" evidence="1">
    <location>
        <position position="133"/>
    </location>
</feature>
<feature type="site" description="Interaction with tRNA" evidence="1">
    <location>
        <position position="348"/>
    </location>
</feature>
<feature type="disulfide bond" description="Alternate" evidence="1">
    <location>
        <begin position="108"/>
        <end position="204"/>
    </location>
</feature>
<name>MNMA_PSEPW</name>
<protein>
    <recommendedName>
        <fullName evidence="1">tRNA-specific 2-thiouridylase MnmA</fullName>
        <ecNumber evidence="1">2.8.1.13</ecNumber>
    </recommendedName>
</protein>
<proteinExistence type="inferred from homology"/>
<reference key="1">
    <citation type="submission" date="2008-02" db="EMBL/GenBank/DDBJ databases">
        <title>Complete sequence of Pseudomonas putida W619.</title>
        <authorList>
            <person name="Copeland A."/>
            <person name="Lucas S."/>
            <person name="Lapidus A."/>
            <person name="Barry K."/>
            <person name="Detter J.C."/>
            <person name="Glavina del Rio T."/>
            <person name="Dalin E."/>
            <person name="Tice H."/>
            <person name="Pitluck S."/>
            <person name="Chain P."/>
            <person name="Malfatti S."/>
            <person name="Shin M."/>
            <person name="Vergez L."/>
            <person name="Schmutz J."/>
            <person name="Larimer F."/>
            <person name="Land M."/>
            <person name="Hauser L."/>
            <person name="Kyrpides N."/>
            <person name="Kim E."/>
            <person name="Taghavi S."/>
            <person name="Vangronsveld D."/>
            <person name="van der Lelie D."/>
            <person name="Richardson P."/>
        </authorList>
    </citation>
    <scope>NUCLEOTIDE SEQUENCE [LARGE SCALE GENOMIC DNA]</scope>
    <source>
        <strain>W619</strain>
    </source>
</reference>